<proteinExistence type="inferred from homology"/>
<accession>Q601L1</accession>
<feature type="chain" id="PRO_0000129852" description="Small ribosomal subunit protein uS19">
    <location>
        <begin position="1"/>
        <end position="90"/>
    </location>
</feature>
<comment type="function">
    <text evidence="1">Protein S19 forms a complex with S13 that binds strongly to the 16S ribosomal RNA.</text>
</comment>
<comment type="similarity">
    <text evidence="1">Belongs to the universal ribosomal protein uS19 family.</text>
</comment>
<evidence type="ECO:0000255" key="1">
    <source>
        <dbReference type="HAMAP-Rule" id="MF_00531"/>
    </source>
</evidence>
<evidence type="ECO:0000305" key="2"/>
<protein>
    <recommendedName>
        <fullName evidence="1">Small ribosomal subunit protein uS19</fullName>
    </recommendedName>
    <alternativeName>
        <fullName evidence="2">30S ribosomal protein S19</fullName>
    </alternativeName>
</protein>
<sequence length="90" mass="10269">MARSLKKGPFADDHLLKKVDEAIAKNSRKPIKTWSRRSTIFPQFVGLTFLVHNGKIFNEVYVTDDMVGHKLGEFSPTRTYHGHGKDKAKK</sequence>
<reference key="1">
    <citation type="journal article" date="2004" name="J. Bacteriol.">
        <title>The genome sequence of Mycoplasma hyopneumoniae strain 232, the agent of swine mycoplasmosis.</title>
        <authorList>
            <person name="Minion F.C."/>
            <person name="Lefkowitz E.J."/>
            <person name="Madsen M.L."/>
            <person name="Cleary B.J."/>
            <person name="Swartzell S.M."/>
            <person name="Mahairas G.G."/>
        </authorList>
    </citation>
    <scope>NUCLEOTIDE SEQUENCE [LARGE SCALE GENOMIC DNA]</scope>
    <source>
        <strain>232</strain>
    </source>
</reference>
<dbReference type="EMBL" id="AE017332">
    <property type="protein sequence ID" value="AAV27448.1"/>
    <property type="molecule type" value="Genomic_DNA"/>
</dbReference>
<dbReference type="RefSeq" id="WP_011206028.1">
    <property type="nucleotide sequence ID" value="NC_006360.1"/>
</dbReference>
<dbReference type="SMR" id="Q601L1"/>
<dbReference type="GeneID" id="41334489"/>
<dbReference type="KEGG" id="mhy:mhp191"/>
<dbReference type="eggNOG" id="COG0185">
    <property type="taxonomic scope" value="Bacteria"/>
</dbReference>
<dbReference type="HOGENOM" id="CLU_144911_0_1_14"/>
<dbReference type="PhylomeDB" id="Q601L1"/>
<dbReference type="Proteomes" id="UP000006822">
    <property type="component" value="Chromosome"/>
</dbReference>
<dbReference type="GO" id="GO:0005737">
    <property type="term" value="C:cytoplasm"/>
    <property type="evidence" value="ECO:0007669"/>
    <property type="project" value="UniProtKB-ARBA"/>
</dbReference>
<dbReference type="GO" id="GO:0015935">
    <property type="term" value="C:small ribosomal subunit"/>
    <property type="evidence" value="ECO:0007669"/>
    <property type="project" value="InterPro"/>
</dbReference>
<dbReference type="GO" id="GO:0019843">
    <property type="term" value="F:rRNA binding"/>
    <property type="evidence" value="ECO:0007669"/>
    <property type="project" value="UniProtKB-UniRule"/>
</dbReference>
<dbReference type="GO" id="GO:0003735">
    <property type="term" value="F:structural constituent of ribosome"/>
    <property type="evidence" value="ECO:0007669"/>
    <property type="project" value="InterPro"/>
</dbReference>
<dbReference type="GO" id="GO:0000028">
    <property type="term" value="P:ribosomal small subunit assembly"/>
    <property type="evidence" value="ECO:0007669"/>
    <property type="project" value="TreeGrafter"/>
</dbReference>
<dbReference type="GO" id="GO:0006412">
    <property type="term" value="P:translation"/>
    <property type="evidence" value="ECO:0007669"/>
    <property type="project" value="UniProtKB-UniRule"/>
</dbReference>
<dbReference type="FunFam" id="3.30.860.10:FF:000001">
    <property type="entry name" value="30S ribosomal protein S19"/>
    <property type="match status" value="1"/>
</dbReference>
<dbReference type="Gene3D" id="3.30.860.10">
    <property type="entry name" value="30s Ribosomal Protein S19, Chain A"/>
    <property type="match status" value="1"/>
</dbReference>
<dbReference type="HAMAP" id="MF_00531">
    <property type="entry name" value="Ribosomal_uS19"/>
    <property type="match status" value="1"/>
</dbReference>
<dbReference type="InterPro" id="IPR002222">
    <property type="entry name" value="Ribosomal_uS19"/>
</dbReference>
<dbReference type="InterPro" id="IPR005732">
    <property type="entry name" value="Ribosomal_uS19_bac-type"/>
</dbReference>
<dbReference type="InterPro" id="IPR020934">
    <property type="entry name" value="Ribosomal_uS19_CS"/>
</dbReference>
<dbReference type="InterPro" id="IPR023575">
    <property type="entry name" value="Ribosomal_uS19_SF"/>
</dbReference>
<dbReference type="NCBIfam" id="TIGR01050">
    <property type="entry name" value="rpsS_bact"/>
    <property type="match status" value="1"/>
</dbReference>
<dbReference type="PANTHER" id="PTHR11880">
    <property type="entry name" value="RIBOSOMAL PROTEIN S19P FAMILY MEMBER"/>
    <property type="match status" value="1"/>
</dbReference>
<dbReference type="PANTHER" id="PTHR11880:SF8">
    <property type="entry name" value="SMALL RIBOSOMAL SUBUNIT PROTEIN US19M"/>
    <property type="match status" value="1"/>
</dbReference>
<dbReference type="Pfam" id="PF00203">
    <property type="entry name" value="Ribosomal_S19"/>
    <property type="match status" value="1"/>
</dbReference>
<dbReference type="PIRSF" id="PIRSF002144">
    <property type="entry name" value="Ribosomal_S19"/>
    <property type="match status" value="1"/>
</dbReference>
<dbReference type="PRINTS" id="PR00975">
    <property type="entry name" value="RIBOSOMALS19"/>
</dbReference>
<dbReference type="SUPFAM" id="SSF54570">
    <property type="entry name" value="Ribosomal protein S19"/>
    <property type="match status" value="1"/>
</dbReference>
<dbReference type="PROSITE" id="PS00323">
    <property type="entry name" value="RIBOSOMAL_S19"/>
    <property type="match status" value="1"/>
</dbReference>
<keyword id="KW-0687">Ribonucleoprotein</keyword>
<keyword id="KW-0689">Ribosomal protein</keyword>
<keyword id="KW-0694">RNA-binding</keyword>
<keyword id="KW-0699">rRNA-binding</keyword>
<name>RS19_MESH2</name>
<gene>
    <name evidence="1" type="primary">rpsS</name>
    <name evidence="1" type="synonym">rps19</name>
    <name type="ordered locus">mhp191</name>
</gene>
<organism>
    <name type="scientific">Mesomycoplasma hyopneumoniae (strain 232)</name>
    <name type="common">Mycoplasma hyopneumoniae</name>
    <dbReference type="NCBI Taxonomy" id="295358"/>
    <lineage>
        <taxon>Bacteria</taxon>
        <taxon>Bacillati</taxon>
        <taxon>Mycoplasmatota</taxon>
        <taxon>Mycoplasmoidales</taxon>
        <taxon>Metamycoplasmataceae</taxon>
        <taxon>Mesomycoplasma</taxon>
    </lineage>
</organism>